<sequence>MYLINQNGWIEVICGSMFSGKSEELIRRVRRTQFAKQHAIVFKPCIDNRYSEEDVVSHNGLKVKAVPVSASKDIFEHITEEMDVIAIDEVQFFDGDIVEVVQVLANRGYRVIVAGLDQDFRGLPFGQVPQLMAIAEHVTKLQAVCSACGSPASRTQRLIDGEPAAFDDPIILVGASESYEPRCRHCHAVPTNKDK</sequence>
<proteinExistence type="inferred from homology"/>
<feature type="chain" id="PRO_1000122652" description="Thymidine kinase">
    <location>
        <begin position="1"/>
        <end position="195"/>
    </location>
</feature>
<feature type="active site" description="Proton acceptor" evidence="1">
    <location>
        <position position="89"/>
    </location>
</feature>
<feature type="binding site" evidence="1">
    <location>
        <begin position="15"/>
        <end position="22"/>
    </location>
    <ligand>
        <name>ATP</name>
        <dbReference type="ChEBI" id="CHEBI:30616"/>
    </ligand>
</feature>
<feature type="binding site" evidence="1">
    <location>
        <begin position="88"/>
        <end position="91"/>
    </location>
    <ligand>
        <name>ATP</name>
        <dbReference type="ChEBI" id="CHEBI:30616"/>
    </ligand>
</feature>
<feature type="binding site" evidence="1">
    <location>
        <position position="145"/>
    </location>
    <ligand>
        <name>Zn(2+)</name>
        <dbReference type="ChEBI" id="CHEBI:29105"/>
    </ligand>
</feature>
<feature type="binding site" evidence="1">
    <location>
        <position position="148"/>
    </location>
    <ligand>
        <name>Zn(2+)</name>
        <dbReference type="ChEBI" id="CHEBI:29105"/>
    </ligand>
</feature>
<feature type="binding site" evidence="1">
    <location>
        <position position="183"/>
    </location>
    <ligand>
        <name>Zn(2+)</name>
        <dbReference type="ChEBI" id="CHEBI:29105"/>
    </ligand>
</feature>
<feature type="binding site" evidence="1">
    <location>
        <position position="186"/>
    </location>
    <ligand>
        <name>Zn(2+)</name>
        <dbReference type="ChEBI" id="CHEBI:29105"/>
    </ligand>
</feature>
<evidence type="ECO:0000255" key="1">
    <source>
        <dbReference type="HAMAP-Rule" id="MF_00124"/>
    </source>
</evidence>
<reference key="1">
    <citation type="journal article" date="2009" name="J. Bacteriol.">
        <title>Complete genome sequence of the extremophilic Bacillus cereus strain Q1 with industrial applications.</title>
        <authorList>
            <person name="Xiong Z."/>
            <person name="Jiang Y."/>
            <person name="Qi D."/>
            <person name="Lu H."/>
            <person name="Yang F."/>
            <person name="Yang J."/>
            <person name="Chen L."/>
            <person name="Sun L."/>
            <person name="Xu X."/>
            <person name="Xue Y."/>
            <person name="Zhu Y."/>
            <person name="Jin Q."/>
        </authorList>
    </citation>
    <scope>NUCLEOTIDE SEQUENCE [LARGE SCALE GENOMIC DNA]</scope>
    <source>
        <strain>Q1</strain>
    </source>
</reference>
<protein>
    <recommendedName>
        <fullName evidence="1">Thymidine kinase</fullName>
        <ecNumber evidence="1">2.7.1.21</ecNumber>
    </recommendedName>
</protein>
<accession>B9IRW3</accession>
<name>KITH_BACCQ</name>
<gene>
    <name evidence="1" type="primary">tdk</name>
    <name type="ordered locus">BCQ_5171</name>
</gene>
<comment type="catalytic activity">
    <reaction evidence="1">
        <text>thymidine + ATP = dTMP + ADP + H(+)</text>
        <dbReference type="Rhea" id="RHEA:19129"/>
        <dbReference type="ChEBI" id="CHEBI:15378"/>
        <dbReference type="ChEBI" id="CHEBI:17748"/>
        <dbReference type="ChEBI" id="CHEBI:30616"/>
        <dbReference type="ChEBI" id="CHEBI:63528"/>
        <dbReference type="ChEBI" id="CHEBI:456216"/>
        <dbReference type="EC" id="2.7.1.21"/>
    </reaction>
</comment>
<comment type="subunit">
    <text evidence="1">Homotetramer.</text>
</comment>
<comment type="subcellular location">
    <subcellularLocation>
        <location evidence="1">Cytoplasm</location>
    </subcellularLocation>
</comment>
<comment type="similarity">
    <text evidence="1">Belongs to the thymidine kinase family.</text>
</comment>
<dbReference type="EC" id="2.7.1.21" evidence="1"/>
<dbReference type="EMBL" id="CP000227">
    <property type="protein sequence ID" value="ACM15571.1"/>
    <property type="molecule type" value="Genomic_DNA"/>
</dbReference>
<dbReference type="SMR" id="B9IRW3"/>
<dbReference type="KEGG" id="bcq:BCQ_5171"/>
<dbReference type="HOGENOM" id="CLU_064400_3_0_9"/>
<dbReference type="Proteomes" id="UP000000441">
    <property type="component" value="Chromosome"/>
</dbReference>
<dbReference type="GO" id="GO:0005829">
    <property type="term" value="C:cytosol"/>
    <property type="evidence" value="ECO:0007669"/>
    <property type="project" value="TreeGrafter"/>
</dbReference>
<dbReference type="GO" id="GO:0005524">
    <property type="term" value="F:ATP binding"/>
    <property type="evidence" value="ECO:0007669"/>
    <property type="project" value="UniProtKB-UniRule"/>
</dbReference>
<dbReference type="GO" id="GO:0004797">
    <property type="term" value="F:thymidine kinase activity"/>
    <property type="evidence" value="ECO:0007669"/>
    <property type="project" value="UniProtKB-UniRule"/>
</dbReference>
<dbReference type="GO" id="GO:0008270">
    <property type="term" value="F:zinc ion binding"/>
    <property type="evidence" value="ECO:0007669"/>
    <property type="project" value="UniProtKB-UniRule"/>
</dbReference>
<dbReference type="GO" id="GO:0071897">
    <property type="term" value="P:DNA biosynthetic process"/>
    <property type="evidence" value="ECO:0007669"/>
    <property type="project" value="UniProtKB-KW"/>
</dbReference>
<dbReference type="GO" id="GO:0046104">
    <property type="term" value="P:thymidine metabolic process"/>
    <property type="evidence" value="ECO:0007669"/>
    <property type="project" value="TreeGrafter"/>
</dbReference>
<dbReference type="FunFam" id="3.30.60.20:FF:000026">
    <property type="entry name" value="Thymidine kinase"/>
    <property type="match status" value="1"/>
</dbReference>
<dbReference type="FunFam" id="3.40.50.300:FF:000384">
    <property type="entry name" value="Thymidine kinase"/>
    <property type="match status" value="1"/>
</dbReference>
<dbReference type="Gene3D" id="3.30.60.20">
    <property type="match status" value="1"/>
</dbReference>
<dbReference type="Gene3D" id="3.40.50.300">
    <property type="entry name" value="P-loop containing nucleotide triphosphate hydrolases"/>
    <property type="match status" value="1"/>
</dbReference>
<dbReference type="HAMAP" id="MF_00124">
    <property type="entry name" value="Thymidine_kinase"/>
    <property type="match status" value="1"/>
</dbReference>
<dbReference type="InterPro" id="IPR027417">
    <property type="entry name" value="P-loop_NTPase"/>
</dbReference>
<dbReference type="InterPro" id="IPR001267">
    <property type="entry name" value="Thymidine_kinase"/>
</dbReference>
<dbReference type="InterPro" id="IPR020633">
    <property type="entry name" value="Thymidine_kinase_CS"/>
</dbReference>
<dbReference type="NCBIfam" id="NF003296">
    <property type="entry name" value="PRK04296.1-1"/>
    <property type="match status" value="1"/>
</dbReference>
<dbReference type="PANTHER" id="PTHR11441">
    <property type="entry name" value="THYMIDINE KINASE"/>
    <property type="match status" value="1"/>
</dbReference>
<dbReference type="PANTHER" id="PTHR11441:SF0">
    <property type="entry name" value="THYMIDINE KINASE, CYTOSOLIC"/>
    <property type="match status" value="1"/>
</dbReference>
<dbReference type="Pfam" id="PF00265">
    <property type="entry name" value="TK"/>
    <property type="match status" value="1"/>
</dbReference>
<dbReference type="PIRSF" id="PIRSF035805">
    <property type="entry name" value="TK_cell"/>
    <property type="match status" value="1"/>
</dbReference>
<dbReference type="SUPFAM" id="SSF57716">
    <property type="entry name" value="Glucocorticoid receptor-like (DNA-binding domain)"/>
    <property type="match status" value="1"/>
</dbReference>
<dbReference type="SUPFAM" id="SSF52540">
    <property type="entry name" value="P-loop containing nucleoside triphosphate hydrolases"/>
    <property type="match status" value="1"/>
</dbReference>
<dbReference type="PROSITE" id="PS00603">
    <property type="entry name" value="TK_CELLULAR_TYPE"/>
    <property type="match status" value="1"/>
</dbReference>
<organism>
    <name type="scientific">Bacillus cereus (strain Q1)</name>
    <dbReference type="NCBI Taxonomy" id="361100"/>
    <lineage>
        <taxon>Bacteria</taxon>
        <taxon>Bacillati</taxon>
        <taxon>Bacillota</taxon>
        <taxon>Bacilli</taxon>
        <taxon>Bacillales</taxon>
        <taxon>Bacillaceae</taxon>
        <taxon>Bacillus</taxon>
        <taxon>Bacillus cereus group</taxon>
    </lineage>
</organism>
<keyword id="KW-0067">ATP-binding</keyword>
<keyword id="KW-0963">Cytoplasm</keyword>
<keyword id="KW-0237">DNA synthesis</keyword>
<keyword id="KW-0418">Kinase</keyword>
<keyword id="KW-0479">Metal-binding</keyword>
<keyword id="KW-0547">Nucleotide-binding</keyword>
<keyword id="KW-0808">Transferase</keyword>
<keyword id="KW-0862">Zinc</keyword>